<accession>O85824</accession>
<accession>Q9LCZ1</accession>
<reference key="1">
    <citation type="submission" date="1999-04" db="EMBL/GenBank/DDBJ databases">
        <title>Sequencing and analysis of the Thermus thermophilus gene cluster equivalent to the S6 operon.</title>
        <authorList>
            <person name="Shcherbakov D.V."/>
            <person name="Cherepanova E.A."/>
            <person name="Garber M.B."/>
        </authorList>
    </citation>
    <scope>NUCLEOTIDE SEQUENCE [GENOMIC DNA]</scope>
    <source>
        <strain>VK1</strain>
    </source>
</reference>
<keyword id="KW-0227">DNA damage</keyword>
<keyword id="KW-0233">DNA recombination</keyword>
<keyword id="KW-0234">DNA repair</keyword>
<keyword id="KW-0235">DNA replication</keyword>
<keyword id="KW-0238">DNA-binding</keyword>
<keyword id="KW-0677">Repeat</keyword>
<comment type="function">
    <text evidence="1">Plays an important role in DNA replication, recombination and repair. Binds to ssDNA and to an array of partner proteins to recruit them to their sites of action during DNA metabolism.</text>
</comment>
<name>SSB_THETH</name>
<organism>
    <name type="scientific">Thermus thermophilus</name>
    <dbReference type="NCBI Taxonomy" id="274"/>
    <lineage>
        <taxon>Bacteria</taxon>
        <taxon>Thermotogati</taxon>
        <taxon>Deinococcota</taxon>
        <taxon>Deinococci</taxon>
        <taxon>Thermales</taxon>
        <taxon>Thermaceae</taxon>
        <taxon>Thermus</taxon>
    </lineage>
</organism>
<feature type="chain" id="PRO_0000096149" description="Single-stranded DNA-binding protein">
    <location>
        <begin position="1"/>
        <end position="266"/>
    </location>
</feature>
<feature type="domain" description="SSB 1" evidence="1">
    <location>
        <begin position="5"/>
        <end position="108"/>
    </location>
</feature>
<feature type="domain" description="SSB 2" evidence="1">
    <location>
        <begin position="128"/>
        <end position="227"/>
    </location>
</feature>
<feature type="region of interest" description="Disordered" evidence="2">
    <location>
        <begin position="226"/>
        <end position="266"/>
    </location>
</feature>
<feature type="short sequence motif" description="Important for interaction with partner proteins" evidence="1">
    <location>
        <begin position="261"/>
        <end position="266"/>
    </location>
</feature>
<feature type="compositionally biased region" description="Acidic residues" evidence="2">
    <location>
        <begin position="250"/>
        <end position="266"/>
    </location>
</feature>
<evidence type="ECO:0000255" key="1">
    <source>
        <dbReference type="HAMAP-Rule" id="MF_00984"/>
    </source>
</evidence>
<evidence type="ECO:0000256" key="2">
    <source>
        <dbReference type="SAM" id="MobiDB-lite"/>
    </source>
</evidence>
<gene>
    <name type="primary">ssb</name>
</gene>
<dbReference type="EMBL" id="AF146075">
    <property type="protein sequence ID" value="AAF27296.1"/>
    <property type="molecule type" value="Genomic_DNA"/>
</dbReference>
<dbReference type="SMR" id="O85824"/>
<dbReference type="GO" id="GO:0009295">
    <property type="term" value="C:nucleoid"/>
    <property type="evidence" value="ECO:0007669"/>
    <property type="project" value="TreeGrafter"/>
</dbReference>
<dbReference type="GO" id="GO:0003697">
    <property type="term" value="F:single-stranded DNA binding"/>
    <property type="evidence" value="ECO:0007669"/>
    <property type="project" value="UniProtKB-UniRule"/>
</dbReference>
<dbReference type="GO" id="GO:0006310">
    <property type="term" value="P:DNA recombination"/>
    <property type="evidence" value="ECO:0007669"/>
    <property type="project" value="UniProtKB-UniRule"/>
</dbReference>
<dbReference type="GO" id="GO:0006281">
    <property type="term" value="P:DNA repair"/>
    <property type="evidence" value="ECO:0007669"/>
    <property type="project" value="UniProtKB-UniRule"/>
</dbReference>
<dbReference type="GO" id="GO:0006260">
    <property type="term" value="P:DNA replication"/>
    <property type="evidence" value="ECO:0007669"/>
    <property type="project" value="UniProtKB-UniRule"/>
</dbReference>
<dbReference type="CDD" id="cd04496">
    <property type="entry name" value="SSB_OBF"/>
    <property type="match status" value="2"/>
</dbReference>
<dbReference type="Gene3D" id="2.40.50.140">
    <property type="entry name" value="Nucleic acid-binding proteins"/>
    <property type="match status" value="2"/>
</dbReference>
<dbReference type="HAMAP" id="MF_00984">
    <property type="entry name" value="SSB"/>
    <property type="match status" value="1"/>
</dbReference>
<dbReference type="InterPro" id="IPR012340">
    <property type="entry name" value="NA-bd_OB-fold"/>
</dbReference>
<dbReference type="InterPro" id="IPR000424">
    <property type="entry name" value="Primosome_PriB/ssb"/>
</dbReference>
<dbReference type="InterPro" id="IPR011344">
    <property type="entry name" value="ssDNA-bd"/>
</dbReference>
<dbReference type="NCBIfam" id="TIGR00621">
    <property type="entry name" value="ssb"/>
    <property type="match status" value="2"/>
</dbReference>
<dbReference type="PANTHER" id="PTHR10302">
    <property type="entry name" value="SINGLE-STRANDED DNA-BINDING PROTEIN"/>
    <property type="match status" value="1"/>
</dbReference>
<dbReference type="PANTHER" id="PTHR10302:SF27">
    <property type="entry name" value="SINGLE-STRANDED DNA-BINDING PROTEIN"/>
    <property type="match status" value="1"/>
</dbReference>
<dbReference type="Pfam" id="PF00436">
    <property type="entry name" value="SSB"/>
    <property type="match status" value="2"/>
</dbReference>
<dbReference type="SUPFAM" id="SSF50249">
    <property type="entry name" value="Nucleic acid-binding proteins"/>
    <property type="match status" value="2"/>
</dbReference>
<dbReference type="PROSITE" id="PS50935">
    <property type="entry name" value="SSB"/>
    <property type="match status" value="2"/>
</dbReference>
<proteinExistence type="inferred from homology"/>
<sequence length="266" mass="30263">MARGLNRVFLIGALATRPDMRYTPAGLAILDLTLAGQDLLLSDNGGEPEVSWYHRVRLLGRQAEMWGDLLDQGQLVFVEGRLEYRQWEREGEKRSELQIRADFLDPLDDRGKKRAEDSRGQPRLRAALNQVFLMGNLTRDPELRYTPQGTAVARLGLAVNERRQGAEERTHFVEVQAWRDLAEWAAELRKGDGLFVIGRLVNDSWTSSSGERRFQTRVEALRLERPTRGPAQACPGRRNRSREVQTGGVDIDEGLEDFPPEEDLPF</sequence>
<protein>
    <recommendedName>
        <fullName evidence="1">Single-stranded DNA-binding protein</fullName>
        <shortName evidence="1">SSB</shortName>
    </recommendedName>
</protein>